<name>ZNHI2_MOUSE</name>
<evidence type="ECO:0000250" key="1">
    <source>
        <dbReference type="UniProtKB" id="Q9UHR6"/>
    </source>
</evidence>
<evidence type="ECO:0000255" key="2">
    <source>
        <dbReference type="PROSITE-ProRule" id="PRU00453"/>
    </source>
</evidence>
<evidence type="ECO:0000256" key="3">
    <source>
        <dbReference type="SAM" id="MobiDB-lite"/>
    </source>
</evidence>
<evidence type="ECO:0000269" key="4">
    <source>
    </source>
</evidence>
<evidence type="ECO:0000305" key="5"/>
<dbReference type="EMBL" id="AF119498">
    <property type="protein sequence ID" value="AAF23592.1"/>
    <property type="molecule type" value="mRNA"/>
</dbReference>
<dbReference type="EMBL" id="AK086863">
    <property type="protein sequence ID" value="BAC39755.1"/>
    <property type="molecule type" value="mRNA"/>
</dbReference>
<dbReference type="EMBL" id="BC019440">
    <property type="protein sequence ID" value="AAH19440.1"/>
    <property type="molecule type" value="mRNA"/>
</dbReference>
<dbReference type="CCDS" id="CCDS57131.1"/>
<dbReference type="RefSeq" id="NP_038887.2">
    <property type="nucleotide sequence ID" value="NM_013859.2"/>
</dbReference>
<dbReference type="SMR" id="Q9QY66"/>
<dbReference type="FunCoup" id="Q9QY66">
    <property type="interactions" value="724"/>
</dbReference>
<dbReference type="IntAct" id="Q9QY66">
    <property type="interactions" value="2"/>
</dbReference>
<dbReference type="MINT" id="Q9QY66"/>
<dbReference type="STRING" id="10090.ENSMUSP00000134031"/>
<dbReference type="GlyGen" id="Q9QY66">
    <property type="glycosylation" value="1 site"/>
</dbReference>
<dbReference type="iPTMnet" id="Q9QY66"/>
<dbReference type="PhosphoSitePlus" id="Q9QY66"/>
<dbReference type="PaxDb" id="10090-ENSMUSP00000134031"/>
<dbReference type="ProteomicsDB" id="275042"/>
<dbReference type="Pumba" id="Q9QY66"/>
<dbReference type="Antibodypedia" id="29668">
    <property type="antibodies" value="64 antibodies from 20 providers"/>
</dbReference>
<dbReference type="Ensembl" id="ENSMUST00000162726.5">
    <property type="protein sequence ID" value="ENSMUSP00000134031.3"/>
    <property type="gene ID" value="ENSMUSG00000075227.7"/>
</dbReference>
<dbReference type="GeneID" id="29805"/>
<dbReference type="KEGG" id="mmu:29805"/>
<dbReference type="UCSC" id="uc008ggv.1">
    <property type="organism name" value="mouse"/>
</dbReference>
<dbReference type="AGR" id="MGI:1352481"/>
<dbReference type="CTD" id="741"/>
<dbReference type="MGI" id="MGI:1352481">
    <property type="gene designation" value="Znhit2"/>
</dbReference>
<dbReference type="VEuPathDB" id="HostDB:ENSMUSG00000075227"/>
<dbReference type="eggNOG" id="KOG4317">
    <property type="taxonomic scope" value="Eukaryota"/>
</dbReference>
<dbReference type="GeneTree" id="ENSGT00390000017147"/>
<dbReference type="HOGENOM" id="CLU_039057_1_0_1"/>
<dbReference type="InParanoid" id="Q9QY66"/>
<dbReference type="OMA" id="WHLWRLL"/>
<dbReference type="OrthoDB" id="10005492at2759"/>
<dbReference type="PhylomeDB" id="Q9QY66"/>
<dbReference type="TreeFam" id="TF324864"/>
<dbReference type="BioGRID-ORCS" id="29805">
    <property type="hits" value="27 hits in 81 CRISPR screens"/>
</dbReference>
<dbReference type="PRO" id="PR:Q9QY66"/>
<dbReference type="Proteomes" id="UP000000589">
    <property type="component" value="Chromosome 19"/>
</dbReference>
<dbReference type="RNAct" id="Q9QY66">
    <property type="molecule type" value="protein"/>
</dbReference>
<dbReference type="Bgee" id="ENSMUSG00000075227">
    <property type="expression patterns" value="Expressed in seminiferous tubule of testis and 240 other cell types or tissues"/>
</dbReference>
<dbReference type="GO" id="GO:0008270">
    <property type="term" value="F:zinc ion binding"/>
    <property type="evidence" value="ECO:0007669"/>
    <property type="project" value="UniProtKB-KW"/>
</dbReference>
<dbReference type="CDD" id="cd23024">
    <property type="entry name" value="zf-HIT_ZNHIT2-3"/>
    <property type="match status" value="1"/>
</dbReference>
<dbReference type="Gene3D" id="3.30.60.190">
    <property type="match status" value="1"/>
</dbReference>
<dbReference type="InterPro" id="IPR007529">
    <property type="entry name" value="Znf_HIT"/>
</dbReference>
<dbReference type="InterPro" id="IPR039646">
    <property type="entry name" value="ZNHIT2"/>
</dbReference>
<dbReference type="PANTHER" id="PTHR15555">
    <property type="entry name" value="ZINC FINGER HIT DOMAIN CONTAINING PROTEIN 2 PROTEIN FON -RELATED"/>
    <property type="match status" value="1"/>
</dbReference>
<dbReference type="PANTHER" id="PTHR15555:SF0">
    <property type="entry name" value="ZINC FINGER HIT DOMAIN-CONTAINING PROTEIN 2"/>
    <property type="match status" value="1"/>
</dbReference>
<dbReference type="Pfam" id="PF04438">
    <property type="entry name" value="zf-HIT"/>
    <property type="match status" value="1"/>
</dbReference>
<dbReference type="SUPFAM" id="SSF144232">
    <property type="entry name" value="HIT/MYND zinc finger-like"/>
    <property type="match status" value="1"/>
</dbReference>
<dbReference type="PROSITE" id="PS51083">
    <property type="entry name" value="ZF_HIT"/>
    <property type="match status" value="1"/>
</dbReference>
<gene>
    <name type="primary">Znhit2</name>
    <name type="synonym">ORF6</name>
</gene>
<accession>Q9QY66</accession>
<accession>Q8C356</accession>
<accession>Q8VCQ7</accession>
<proteinExistence type="evidence at transcript level"/>
<reference key="1">
    <citation type="journal article" date="2000" name="Mamm. Genome">
        <title>Molecular characterization of human and murine c11orf5, a new member of the FAUNA gene cluster.</title>
        <authorList>
            <person name="Lemmens I.H."/>
            <person name="Farnebo F."/>
            <person name="Piehl F."/>
            <person name="Merregaert J."/>
            <person name="Van de Ven W.J.M."/>
            <person name="Larsson C."/>
            <person name="Kas K."/>
        </authorList>
    </citation>
    <scope>NUCLEOTIDE SEQUENCE [MRNA]</scope>
    <scope>TISSUE SPECIFICITY</scope>
</reference>
<reference key="2">
    <citation type="journal article" date="2005" name="Science">
        <title>The transcriptional landscape of the mammalian genome.</title>
        <authorList>
            <person name="Carninci P."/>
            <person name="Kasukawa T."/>
            <person name="Katayama S."/>
            <person name="Gough J."/>
            <person name="Frith M.C."/>
            <person name="Maeda N."/>
            <person name="Oyama R."/>
            <person name="Ravasi T."/>
            <person name="Lenhard B."/>
            <person name="Wells C."/>
            <person name="Kodzius R."/>
            <person name="Shimokawa K."/>
            <person name="Bajic V.B."/>
            <person name="Brenner S.E."/>
            <person name="Batalov S."/>
            <person name="Forrest A.R."/>
            <person name="Zavolan M."/>
            <person name="Davis M.J."/>
            <person name="Wilming L.G."/>
            <person name="Aidinis V."/>
            <person name="Allen J.E."/>
            <person name="Ambesi-Impiombato A."/>
            <person name="Apweiler R."/>
            <person name="Aturaliya R.N."/>
            <person name="Bailey T.L."/>
            <person name="Bansal M."/>
            <person name="Baxter L."/>
            <person name="Beisel K.W."/>
            <person name="Bersano T."/>
            <person name="Bono H."/>
            <person name="Chalk A.M."/>
            <person name="Chiu K.P."/>
            <person name="Choudhary V."/>
            <person name="Christoffels A."/>
            <person name="Clutterbuck D.R."/>
            <person name="Crowe M.L."/>
            <person name="Dalla E."/>
            <person name="Dalrymple B.P."/>
            <person name="de Bono B."/>
            <person name="Della Gatta G."/>
            <person name="di Bernardo D."/>
            <person name="Down T."/>
            <person name="Engstrom P."/>
            <person name="Fagiolini M."/>
            <person name="Faulkner G."/>
            <person name="Fletcher C.F."/>
            <person name="Fukushima T."/>
            <person name="Furuno M."/>
            <person name="Futaki S."/>
            <person name="Gariboldi M."/>
            <person name="Georgii-Hemming P."/>
            <person name="Gingeras T.R."/>
            <person name="Gojobori T."/>
            <person name="Green R.E."/>
            <person name="Gustincich S."/>
            <person name="Harbers M."/>
            <person name="Hayashi Y."/>
            <person name="Hensch T.K."/>
            <person name="Hirokawa N."/>
            <person name="Hill D."/>
            <person name="Huminiecki L."/>
            <person name="Iacono M."/>
            <person name="Ikeo K."/>
            <person name="Iwama A."/>
            <person name="Ishikawa T."/>
            <person name="Jakt M."/>
            <person name="Kanapin A."/>
            <person name="Katoh M."/>
            <person name="Kawasawa Y."/>
            <person name="Kelso J."/>
            <person name="Kitamura H."/>
            <person name="Kitano H."/>
            <person name="Kollias G."/>
            <person name="Krishnan S.P."/>
            <person name="Kruger A."/>
            <person name="Kummerfeld S.K."/>
            <person name="Kurochkin I.V."/>
            <person name="Lareau L.F."/>
            <person name="Lazarevic D."/>
            <person name="Lipovich L."/>
            <person name="Liu J."/>
            <person name="Liuni S."/>
            <person name="McWilliam S."/>
            <person name="Madan Babu M."/>
            <person name="Madera M."/>
            <person name="Marchionni L."/>
            <person name="Matsuda H."/>
            <person name="Matsuzawa S."/>
            <person name="Miki H."/>
            <person name="Mignone F."/>
            <person name="Miyake S."/>
            <person name="Morris K."/>
            <person name="Mottagui-Tabar S."/>
            <person name="Mulder N."/>
            <person name="Nakano N."/>
            <person name="Nakauchi H."/>
            <person name="Ng P."/>
            <person name="Nilsson R."/>
            <person name="Nishiguchi S."/>
            <person name="Nishikawa S."/>
            <person name="Nori F."/>
            <person name="Ohara O."/>
            <person name="Okazaki Y."/>
            <person name="Orlando V."/>
            <person name="Pang K.C."/>
            <person name="Pavan W.J."/>
            <person name="Pavesi G."/>
            <person name="Pesole G."/>
            <person name="Petrovsky N."/>
            <person name="Piazza S."/>
            <person name="Reed J."/>
            <person name="Reid J.F."/>
            <person name="Ring B.Z."/>
            <person name="Ringwald M."/>
            <person name="Rost B."/>
            <person name="Ruan Y."/>
            <person name="Salzberg S.L."/>
            <person name="Sandelin A."/>
            <person name="Schneider C."/>
            <person name="Schoenbach C."/>
            <person name="Sekiguchi K."/>
            <person name="Semple C.A."/>
            <person name="Seno S."/>
            <person name="Sessa L."/>
            <person name="Sheng Y."/>
            <person name="Shibata Y."/>
            <person name="Shimada H."/>
            <person name="Shimada K."/>
            <person name="Silva D."/>
            <person name="Sinclair B."/>
            <person name="Sperling S."/>
            <person name="Stupka E."/>
            <person name="Sugiura K."/>
            <person name="Sultana R."/>
            <person name="Takenaka Y."/>
            <person name="Taki K."/>
            <person name="Tammoja K."/>
            <person name="Tan S.L."/>
            <person name="Tang S."/>
            <person name="Taylor M.S."/>
            <person name="Tegner J."/>
            <person name="Teichmann S.A."/>
            <person name="Ueda H.R."/>
            <person name="van Nimwegen E."/>
            <person name="Verardo R."/>
            <person name="Wei C.L."/>
            <person name="Yagi K."/>
            <person name="Yamanishi H."/>
            <person name="Zabarovsky E."/>
            <person name="Zhu S."/>
            <person name="Zimmer A."/>
            <person name="Hide W."/>
            <person name="Bult C."/>
            <person name="Grimmond S.M."/>
            <person name="Teasdale R.D."/>
            <person name="Liu E.T."/>
            <person name="Brusic V."/>
            <person name="Quackenbush J."/>
            <person name="Wahlestedt C."/>
            <person name="Mattick J.S."/>
            <person name="Hume D.A."/>
            <person name="Kai C."/>
            <person name="Sasaki D."/>
            <person name="Tomaru Y."/>
            <person name="Fukuda S."/>
            <person name="Kanamori-Katayama M."/>
            <person name="Suzuki M."/>
            <person name="Aoki J."/>
            <person name="Arakawa T."/>
            <person name="Iida J."/>
            <person name="Imamura K."/>
            <person name="Itoh M."/>
            <person name="Kato T."/>
            <person name="Kawaji H."/>
            <person name="Kawagashira N."/>
            <person name="Kawashima T."/>
            <person name="Kojima M."/>
            <person name="Kondo S."/>
            <person name="Konno H."/>
            <person name="Nakano K."/>
            <person name="Ninomiya N."/>
            <person name="Nishio T."/>
            <person name="Okada M."/>
            <person name="Plessy C."/>
            <person name="Shibata K."/>
            <person name="Shiraki T."/>
            <person name="Suzuki S."/>
            <person name="Tagami M."/>
            <person name="Waki K."/>
            <person name="Watahiki A."/>
            <person name="Okamura-Oho Y."/>
            <person name="Suzuki H."/>
            <person name="Kawai J."/>
            <person name="Hayashizaki Y."/>
        </authorList>
    </citation>
    <scope>NUCLEOTIDE SEQUENCE [LARGE SCALE MRNA]</scope>
    <source>
        <strain>C57BL/6J</strain>
        <tissue>Lung</tissue>
    </source>
</reference>
<reference key="3">
    <citation type="journal article" date="2004" name="Genome Res.">
        <title>The status, quality, and expansion of the NIH full-length cDNA project: the Mammalian Gene Collection (MGC).</title>
        <authorList>
            <consortium name="The MGC Project Team"/>
        </authorList>
    </citation>
    <scope>NUCLEOTIDE SEQUENCE [LARGE SCALE MRNA]</scope>
    <source>
        <tissue>Liver</tissue>
    </source>
</reference>
<keyword id="KW-0007">Acetylation</keyword>
<keyword id="KW-0479">Metal-binding</keyword>
<keyword id="KW-0597">Phosphoprotein</keyword>
<keyword id="KW-1185">Reference proteome</keyword>
<keyword id="KW-0862">Zinc</keyword>
<keyword id="KW-0863">Zinc-finger</keyword>
<comment type="function">
    <text evidence="1">May act as a bridging factor mediating the interaction between the R2TP/Prefoldin-like (R2TP/PFDL) complex and U5 small nuclear ribonucleoprotein (U5 snRNP) (By similarity). Required for the interaction of R2TP complex subunit RPAP3 and prefoldin-like subunit URI1 with U5 snRNP proteins EFTUD2 and PRPF8 (By similarity). May play a role in regulating the composition of the U5 snRNP complex (By similarity).</text>
</comment>
<comment type="subunit">
    <text evidence="1">Interacts (via HIT-type zinc finger) with RUVBL2 in the presence of ATP or ADP; shows a stronger interaction in the presence of ADP.</text>
</comment>
<comment type="tissue specificity">
    <text evidence="4">Low expression in most tissues; highly expressed in testis; particularly in seminiferous tubules.</text>
</comment>
<protein>
    <recommendedName>
        <fullName>Zinc finger HIT domain-containing protein 2</fullName>
    </recommendedName>
    <alternativeName>
        <fullName>Protein FON</fullName>
    </alternativeName>
</protein>
<feature type="chain" id="PRO_0000173549" description="Zinc finger HIT domain-containing protein 2">
    <location>
        <begin position="1"/>
        <end position="399"/>
    </location>
</feature>
<feature type="zinc finger region" description="HIT-type" evidence="2">
    <location>
        <begin position="7"/>
        <end position="41"/>
    </location>
</feature>
<feature type="region of interest" description="Disordered" evidence="3">
    <location>
        <begin position="70"/>
        <end position="97"/>
    </location>
</feature>
<feature type="region of interest" description="Disordered" evidence="3">
    <location>
        <begin position="152"/>
        <end position="175"/>
    </location>
</feature>
<feature type="compositionally biased region" description="Gly residues" evidence="3">
    <location>
        <begin position="86"/>
        <end position="96"/>
    </location>
</feature>
<feature type="binding site" evidence="2">
    <location>
        <position position="7"/>
    </location>
    <ligand>
        <name>Zn(2+)</name>
        <dbReference type="ChEBI" id="CHEBI:29105"/>
        <label>1</label>
    </ligand>
</feature>
<feature type="binding site" evidence="2">
    <location>
        <position position="10"/>
    </location>
    <ligand>
        <name>Zn(2+)</name>
        <dbReference type="ChEBI" id="CHEBI:29105"/>
        <label>1</label>
    </ligand>
</feature>
<feature type="binding site" evidence="2">
    <location>
        <position position="22"/>
    </location>
    <ligand>
        <name>Zn(2+)</name>
        <dbReference type="ChEBI" id="CHEBI:29105"/>
        <label>2</label>
    </ligand>
</feature>
<feature type="binding site" evidence="2">
    <location>
        <position position="25"/>
    </location>
    <ligand>
        <name>Zn(2+)</name>
        <dbReference type="ChEBI" id="CHEBI:29105"/>
        <label>2</label>
    </ligand>
</feature>
<feature type="binding site" evidence="2">
    <location>
        <position position="30"/>
    </location>
    <ligand>
        <name>Zn(2+)</name>
        <dbReference type="ChEBI" id="CHEBI:29105"/>
        <label>1</label>
    </ligand>
</feature>
<feature type="binding site" evidence="2">
    <location>
        <position position="34"/>
    </location>
    <ligand>
        <name>Zn(2+)</name>
        <dbReference type="ChEBI" id="CHEBI:29105"/>
        <label>1</label>
    </ligand>
</feature>
<feature type="binding site" evidence="2">
    <location>
        <position position="38"/>
    </location>
    <ligand>
        <name>Zn(2+)</name>
        <dbReference type="ChEBI" id="CHEBI:29105"/>
        <label>2</label>
    </ligand>
</feature>
<feature type="binding site" evidence="2">
    <location>
        <position position="41"/>
    </location>
    <ligand>
        <name>Zn(2+)</name>
        <dbReference type="ChEBI" id="CHEBI:29105"/>
        <label>2</label>
    </ligand>
</feature>
<feature type="modified residue" description="N-acetylmethionine" evidence="1">
    <location>
        <position position="1"/>
    </location>
</feature>
<feature type="modified residue" description="Phosphothreonine" evidence="1">
    <location>
        <position position="161"/>
    </location>
</feature>
<feature type="sequence conflict" description="In Ref. 3; AAH19440." evidence="5" ref="3">
    <original>G</original>
    <variation>R</variation>
    <location>
        <position position="89"/>
    </location>
</feature>
<feature type="sequence conflict" description="In Ref. 1; AAF23592." evidence="5" ref="1">
    <original>AG</original>
    <variation>RN</variation>
    <location>
        <begin position="119"/>
        <end position="120"/>
    </location>
</feature>
<sequence length="399" mass="42897">MEPAGLCGFCPAGEALPARYTCPRCNAPYCSLRCYRAHGACAEDFYRDQVLRELRGRSASPSRLAGALRRLREQREAEDEPEEAGLGPGARPGGLSGLWERLTPAEKAAFERLLSRGEAGRLLPPWRPWWWGRGTGPRLLEELDHAANRDLAEPEPAPARTALQSGDDAAAAEPFAEDSCAARPLALPARIPALASLSRSPASPLVRFQLPNVLFAYAHTLALYHGGDDDALLSDFCATLLDVSGALGAQQVFGSTEEALQAAAHVLEAGEHPPGPLGTRGAMQEVARILLGEGPVNQKGYTLTALGHLAQTLGRARKQAVIGGERDRLYRARKKCQFLLAWTNENEAALTPLALDCARAHRAHAVTAEEMATLTGELERLWGGPVPPTPRTLIEELPG</sequence>
<organism>
    <name type="scientific">Mus musculus</name>
    <name type="common">Mouse</name>
    <dbReference type="NCBI Taxonomy" id="10090"/>
    <lineage>
        <taxon>Eukaryota</taxon>
        <taxon>Metazoa</taxon>
        <taxon>Chordata</taxon>
        <taxon>Craniata</taxon>
        <taxon>Vertebrata</taxon>
        <taxon>Euteleostomi</taxon>
        <taxon>Mammalia</taxon>
        <taxon>Eutheria</taxon>
        <taxon>Euarchontoglires</taxon>
        <taxon>Glires</taxon>
        <taxon>Rodentia</taxon>
        <taxon>Myomorpha</taxon>
        <taxon>Muroidea</taxon>
        <taxon>Muridae</taxon>
        <taxon>Murinae</taxon>
        <taxon>Mus</taxon>
        <taxon>Mus</taxon>
    </lineage>
</organism>